<reference key="1">
    <citation type="journal article" date="2009" name="J. Bacteriol.">
        <title>Genome sequences of three Agrobacterium biovars help elucidate the evolution of multichromosome genomes in bacteria.</title>
        <authorList>
            <person name="Slater S.C."/>
            <person name="Goldman B.S."/>
            <person name="Goodner B."/>
            <person name="Setubal J.C."/>
            <person name="Farrand S.K."/>
            <person name="Nester E.W."/>
            <person name="Burr T.J."/>
            <person name="Banta L."/>
            <person name="Dickerman A.W."/>
            <person name="Paulsen I."/>
            <person name="Otten L."/>
            <person name="Suen G."/>
            <person name="Welch R."/>
            <person name="Almeida N.F."/>
            <person name="Arnold F."/>
            <person name="Burton O.T."/>
            <person name="Du Z."/>
            <person name="Ewing A."/>
            <person name="Godsy E."/>
            <person name="Heisel S."/>
            <person name="Houmiel K.L."/>
            <person name="Jhaveri J."/>
            <person name="Lu J."/>
            <person name="Miller N.M."/>
            <person name="Norton S."/>
            <person name="Chen Q."/>
            <person name="Phoolcharoen W."/>
            <person name="Ohlin V."/>
            <person name="Ondrusek D."/>
            <person name="Pride N."/>
            <person name="Stricklin S.L."/>
            <person name="Sun J."/>
            <person name="Wheeler C."/>
            <person name="Wilson L."/>
            <person name="Zhu H."/>
            <person name="Wood D.W."/>
        </authorList>
    </citation>
    <scope>NUCLEOTIDE SEQUENCE [LARGE SCALE GENOMIC DNA]</scope>
    <source>
        <strain>ATCC BAA-846 / DSM 112012 / S4</strain>
    </source>
</reference>
<accession>B9K253</accession>
<gene>
    <name evidence="1" type="primary">thiC</name>
    <name type="ordered locus">Avi_5917</name>
</gene>
<dbReference type="EC" id="4.1.99.17" evidence="1"/>
<dbReference type="EMBL" id="CP000634">
    <property type="protein sequence ID" value="ACM38951.1"/>
    <property type="molecule type" value="Genomic_DNA"/>
</dbReference>
<dbReference type="RefSeq" id="WP_012654193.1">
    <property type="nucleotide sequence ID" value="NC_011988.1"/>
</dbReference>
<dbReference type="SMR" id="B9K253"/>
<dbReference type="STRING" id="311402.Avi_5917"/>
<dbReference type="KEGG" id="avi:Avi_5917"/>
<dbReference type="eggNOG" id="COG0422">
    <property type="taxonomic scope" value="Bacteria"/>
</dbReference>
<dbReference type="HOGENOM" id="CLU_013181_2_1_5"/>
<dbReference type="UniPathway" id="UPA00060"/>
<dbReference type="Proteomes" id="UP000001596">
    <property type="component" value="Chromosome 2"/>
</dbReference>
<dbReference type="GO" id="GO:0005829">
    <property type="term" value="C:cytosol"/>
    <property type="evidence" value="ECO:0007669"/>
    <property type="project" value="TreeGrafter"/>
</dbReference>
<dbReference type="GO" id="GO:0051539">
    <property type="term" value="F:4 iron, 4 sulfur cluster binding"/>
    <property type="evidence" value="ECO:0007669"/>
    <property type="project" value="UniProtKB-KW"/>
</dbReference>
<dbReference type="GO" id="GO:0016830">
    <property type="term" value="F:carbon-carbon lyase activity"/>
    <property type="evidence" value="ECO:0007669"/>
    <property type="project" value="InterPro"/>
</dbReference>
<dbReference type="GO" id="GO:0008270">
    <property type="term" value="F:zinc ion binding"/>
    <property type="evidence" value="ECO:0007669"/>
    <property type="project" value="UniProtKB-UniRule"/>
</dbReference>
<dbReference type="GO" id="GO:0009228">
    <property type="term" value="P:thiamine biosynthetic process"/>
    <property type="evidence" value="ECO:0007669"/>
    <property type="project" value="UniProtKB-KW"/>
</dbReference>
<dbReference type="GO" id="GO:0009229">
    <property type="term" value="P:thiamine diphosphate biosynthetic process"/>
    <property type="evidence" value="ECO:0007669"/>
    <property type="project" value="UniProtKB-UniRule"/>
</dbReference>
<dbReference type="FunFam" id="3.20.20.540:FF:000001">
    <property type="entry name" value="Phosphomethylpyrimidine synthase"/>
    <property type="match status" value="1"/>
</dbReference>
<dbReference type="Gene3D" id="6.10.250.620">
    <property type="match status" value="1"/>
</dbReference>
<dbReference type="Gene3D" id="3.20.20.540">
    <property type="entry name" value="Radical SAM ThiC family, central domain"/>
    <property type="match status" value="1"/>
</dbReference>
<dbReference type="HAMAP" id="MF_00089">
    <property type="entry name" value="ThiC"/>
    <property type="match status" value="1"/>
</dbReference>
<dbReference type="InterPro" id="IPR037509">
    <property type="entry name" value="ThiC"/>
</dbReference>
<dbReference type="InterPro" id="IPR025747">
    <property type="entry name" value="ThiC-associated_dom"/>
</dbReference>
<dbReference type="InterPro" id="IPR038521">
    <property type="entry name" value="ThiC/Bza_core_dom"/>
</dbReference>
<dbReference type="InterPro" id="IPR002817">
    <property type="entry name" value="ThiC/BzaA/B"/>
</dbReference>
<dbReference type="NCBIfam" id="NF006763">
    <property type="entry name" value="PRK09284.1"/>
    <property type="match status" value="1"/>
</dbReference>
<dbReference type="NCBIfam" id="NF009895">
    <property type="entry name" value="PRK13352.1"/>
    <property type="match status" value="1"/>
</dbReference>
<dbReference type="NCBIfam" id="TIGR00190">
    <property type="entry name" value="thiC"/>
    <property type="match status" value="1"/>
</dbReference>
<dbReference type="PANTHER" id="PTHR30557:SF1">
    <property type="entry name" value="PHOSPHOMETHYLPYRIMIDINE SYNTHASE, CHLOROPLASTIC"/>
    <property type="match status" value="1"/>
</dbReference>
<dbReference type="PANTHER" id="PTHR30557">
    <property type="entry name" value="THIAMINE BIOSYNTHESIS PROTEIN THIC"/>
    <property type="match status" value="1"/>
</dbReference>
<dbReference type="Pfam" id="PF13667">
    <property type="entry name" value="ThiC-associated"/>
    <property type="match status" value="1"/>
</dbReference>
<dbReference type="Pfam" id="PF01964">
    <property type="entry name" value="ThiC_Rad_SAM"/>
    <property type="match status" value="1"/>
</dbReference>
<dbReference type="SFLD" id="SFLDF00407">
    <property type="entry name" value="phosphomethylpyrimidine_syntha"/>
    <property type="match status" value="1"/>
</dbReference>
<dbReference type="SFLD" id="SFLDG01114">
    <property type="entry name" value="phosphomethylpyrimidine_syntha"/>
    <property type="match status" value="1"/>
</dbReference>
<dbReference type="SFLD" id="SFLDS00113">
    <property type="entry name" value="Radical_SAM_Phosphomethylpyrim"/>
    <property type="match status" value="1"/>
</dbReference>
<proteinExistence type="inferred from homology"/>
<keyword id="KW-0004">4Fe-4S</keyword>
<keyword id="KW-0408">Iron</keyword>
<keyword id="KW-0411">Iron-sulfur</keyword>
<keyword id="KW-0456">Lyase</keyword>
<keyword id="KW-0479">Metal-binding</keyword>
<keyword id="KW-1185">Reference proteome</keyword>
<keyword id="KW-0949">S-adenosyl-L-methionine</keyword>
<keyword id="KW-0784">Thiamine biosynthesis</keyword>
<keyword id="KW-0862">Zinc</keyword>
<evidence type="ECO:0000255" key="1">
    <source>
        <dbReference type="HAMAP-Rule" id="MF_00089"/>
    </source>
</evidence>
<comment type="function">
    <text evidence="1">Catalyzes the synthesis of the hydroxymethylpyrimidine phosphate (HMP-P) moiety of thiamine from aminoimidazole ribotide (AIR) in a radical S-adenosyl-L-methionine (SAM)-dependent reaction.</text>
</comment>
<comment type="catalytic activity">
    <reaction evidence="1">
        <text>5-amino-1-(5-phospho-beta-D-ribosyl)imidazole + S-adenosyl-L-methionine = 4-amino-2-methyl-5-(phosphooxymethyl)pyrimidine + CO + 5'-deoxyadenosine + formate + L-methionine + 3 H(+)</text>
        <dbReference type="Rhea" id="RHEA:24840"/>
        <dbReference type="ChEBI" id="CHEBI:15378"/>
        <dbReference type="ChEBI" id="CHEBI:15740"/>
        <dbReference type="ChEBI" id="CHEBI:17245"/>
        <dbReference type="ChEBI" id="CHEBI:17319"/>
        <dbReference type="ChEBI" id="CHEBI:57844"/>
        <dbReference type="ChEBI" id="CHEBI:58354"/>
        <dbReference type="ChEBI" id="CHEBI:59789"/>
        <dbReference type="ChEBI" id="CHEBI:137981"/>
        <dbReference type="EC" id="4.1.99.17"/>
    </reaction>
</comment>
<comment type="cofactor">
    <cofactor evidence="1">
        <name>[4Fe-4S] cluster</name>
        <dbReference type="ChEBI" id="CHEBI:49883"/>
    </cofactor>
    <text evidence="1">Binds 1 [4Fe-4S] cluster per subunit. The cluster is coordinated with 3 cysteines and an exchangeable S-adenosyl-L-methionine.</text>
</comment>
<comment type="pathway">
    <text evidence="1">Cofactor biosynthesis; thiamine diphosphate biosynthesis.</text>
</comment>
<comment type="subunit">
    <text evidence="1">Homodimer.</text>
</comment>
<comment type="similarity">
    <text evidence="1">Belongs to the ThiC family.</text>
</comment>
<organism>
    <name type="scientific">Allorhizobium ampelinum (strain ATCC BAA-846 / DSM 112012 / S4)</name>
    <name type="common">Agrobacterium vitis (strain S4)</name>
    <dbReference type="NCBI Taxonomy" id="311402"/>
    <lineage>
        <taxon>Bacteria</taxon>
        <taxon>Pseudomonadati</taxon>
        <taxon>Pseudomonadota</taxon>
        <taxon>Alphaproteobacteria</taxon>
        <taxon>Hyphomicrobiales</taxon>
        <taxon>Rhizobiaceae</taxon>
        <taxon>Rhizobium/Agrobacterium group</taxon>
        <taxon>Allorhizobium</taxon>
        <taxon>Allorhizobium ampelinum</taxon>
    </lineage>
</organism>
<sequence length="610" mass="67130">MNIAPQFPTPEVTTGTLPASAKVHIAGEIHPQIRVPMRQITLHPTSGEPPVNVYDSSGPYTDPNATIAIDAGLPRIRAEWVVARGDVEPYAGRHVKPEDNGFASGEKLTPEFPVRNAPLRAKPGQAVTQLAYARAGIVTPEMEFIAIRENIGRKAAKDALIRDGESFGASIPDYVTPEFVRQEVAMGRAIIPANINHPEAEPMIIGRNFLVKINANIGNSAVTSSMAEEVEKMVWAIRWGADTVMDLSTGRNIHNIRDWIIRNSPVPIGTVPLYQALEKVHGIAENLTWDVFRDTLIEQAEQGVDYFTIHAGVRLSYIHLTVNRVTGIVSRGGSIMAKWCLHHHKESFLYEHFDEICDICRAYDVSFSLGDGLRPGSIADANDAAQFAELETLGELTKIAWAKDCQVMIEGPGHVPMHKIKENMDKQLKTCGEAPFYTLGPLTTDIAPGYDHITSGIGAAMIGWYGTAMLCYVTPKEHLGLPDRNDVKTGVITYKIAAHAADLAKGHPAAQVRDDALSRARFEFRWEDQFNLSLDPDTARSFHDETLPKEAHKVAHFCSMCGPKFCSMRISHDIRAEAQKEGLEAMAAKYRDGGDLYMPVSDEEKPSVGE</sequence>
<protein>
    <recommendedName>
        <fullName evidence="1">Phosphomethylpyrimidine synthase</fullName>
        <ecNumber evidence="1">4.1.99.17</ecNumber>
    </recommendedName>
    <alternativeName>
        <fullName evidence="1">Hydroxymethylpyrimidine phosphate synthase</fullName>
        <shortName evidence="1">HMP-P synthase</shortName>
        <shortName evidence="1">HMP-phosphate synthase</shortName>
        <shortName evidence="1">HMPP synthase</shortName>
    </alternativeName>
    <alternativeName>
        <fullName evidence="1">Thiamine biosynthesis protein ThiC</fullName>
    </alternativeName>
</protein>
<name>THIC_ALLAM</name>
<feature type="chain" id="PRO_1000118497" description="Phosphomethylpyrimidine synthase">
    <location>
        <begin position="1"/>
        <end position="610"/>
    </location>
</feature>
<feature type="binding site" evidence="1">
    <location>
        <position position="216"/>
    </location>
    <ligand>
        <name>substrate</name>
    </ligand>
</feature>
<feature type="binding site" evidence="1">
    <location>
        <position position="245"/>
    </location>
    <ligand>
        <name>substrate</name>
    </ligand>
</feature>
<feature type="binding site" evidence="1">
    <location>
        <position position="274"/>
    </location>
    <ligand>
        <name>substrate</name>
    </ligand>
</feature>
<feature type="binding site" evidence="1">
    <location>
        <position position="310"/>
    </location>
    <ligand>
        <name>substrate</name>
    </ligand>
</feature>
<feature type="binding site" evidence="1">
    <location>
        <begin position="330"/>
        <end position="332"/>
    </location>
    <ligand>
        <name>substrate</name>
    </ligand>
</feature>
<feature type="binding site" evidence="1">
    <location>
        <begin position="371"/>
        <end position="374"/>
    </location>
    <ligand>
        <name>substrate</name>
    </ligand>
</feature>
<feature type="binding site" evidence="1">
    <location>
        <position position="410"/>
    </location>
    <ligand>
        <name>substrate</name>
    </ligand>
</feature>
<feature type="binding site" evidence="1">
    <location>
        <position position="414"/>
    </location>
    <ligand>
        <name>Zn(2+)</name>
        <dbReference type="ChEBI" id="CHEBI:29105"/>
    </ligand>
</feature>
<feature type="binding site" evidence="1">
    <location>
        <position position="437"/>
    </location>
    <ligand>
        <name>substrate</name>
    </ligand>
</feature>
<feature type="binding site" evidence="1">
    <location>
        <position position="478"/>
    </location>
    <ligand>
        <name>Zn(2+)</name>
        <dbReference type="ChEBI" id="CHEBI:29105"/>
    </ligand>
</feature>
<feature type="binding site" evidence="1">
    <location>
        <position position="558"/>
    </location>
    <ligand>
        <name>[4Fe-4S] cluster</name>
        <dbReference type="ChEBI" id="CHEBI:49883"/>
        <note>4Fe-4S-S-AdoMet</note>
    </ligand>
</feature>
<feature type="binding site" evidence="1">
    <location>
        <position position="561"/>
    </location>
    <ligand>
        <name>[4Fe-4S] cluster</name>
        <dbReference type="ChEBI" id="CHEBI:49883"/>
        <note>4Fe-4S-S-AdoMet</note>
    </ligand>
</feature>
<feature type="binding site" evidence="1">
    <location>
        <position position="566"/>
    </location>
    <ligand>
        <name>[4Fe-4S] cluster</name>
        <dbReference type="ChEBI" id="CHEBI:49883"/>
        <note>4Fe-4S-S-AdoMet</note>
    </ligand>
</feature>